<name>EFG_LACPL</name>
<evidence type="ECO:0000255" key="1">
    <source>
        <dbReference type="HAMAP-Rule" id="MF_00054"/>
    </source>
</evidence>
<feature type="chain" id="PRO_0000091139" description="Elongation factor G">
    <location>
        <begin position="1"/>
        <end position="698"/>
    </location>
</feature>
<feature type="domain" description="tr-type G">
    <location>
        <begin position="10"/>
        <end position="285"/>
    </location>
</feature>
<feature type="binding site" evidence="1">
    <location>
        <begin position="19"/>
        <end position="26"/>
    </location>
    <ligand>
        <name>GTP</name>
        <dbReference type="ChEBI" id="CHEBI:37565"/>
    </ligand>
</feature>
<feature type="binding site" evidence="1">
    <location>
        <begin position="83"/>
        <end position="87"/>
    </location>
    <ligand>
        <name>GTP</name>
        <dbReference type="ChEBI" id="CHEBI:37565"/>
    </ligand>
</feature>
<feature type="binding site" evidence="1">
    <location>
        <begin position="137"/>
        <end position="140"/>
    </location>
    <ligand>
        <name>GTP</name>
        <dbReference type="ChEBI" id="CHEBI:37565"/>
    </ligand>
</feature>
<dbReference type="EMBL" id="AL935263">
    <property type="protein sequence ID" value="CCC78442.1"/>
    <property type="molecule type" value="Genomic_DNA"/>
</dbReference>
<dbReference type="RefSeq" id="WP_003645499.1">
    <property type="nucleotide sequence ID" value="NC_004567.2"/>
</dbReference>
<dbReference type="RefSeq" id="YP_004888956.1">
    <property type="nucleotide sequence ID" value="NC_004567.2"/>
</dbReference>
<dbReference type="SMR" id="Q88XY8"/>
<dbReference type="STRING" id="220668.lp_1027"/>
<dbReference type="EnsemblBacteria" id="CCC78442">
    <property type="protein sequence ID" value="CCC78442"/>
    <property type="gene ID" value="lp_1027"/>
</dbReference>
<dbReference type="KEGG" id="lpl:lp_1027"/>
<dbReference type="PATRIC" id="fig|220668.9.peg.868"/>
<dbReference type="eggNOG" id="COG0480">
    <property type="taxonomic scope" value="Bacteria"/>
</dbReference>
<dbReference type="HOGENOM" id="CLU_002794_4_1_9"/>
<dbReference type="OrthoDB" id="9804431at2"/>
<dbReference type="PhylomeDB" id="Q88XY8"/>
<dbReference type="Proteomes" id="UP000000432">
    <property type="component" value="Chromosome"/>
</dbReference>
<dbReference type="GO" id="GO:0005737">
    <property type="term" value="C:cytoplasm"/>
    <property type="evidence" value="ECO:0007669"/>
    <property type="project" value="UniProtKB-SubCell"/>
</dbReference>
<dbReference type="GO" id="GO:0005525">
    <property type="term" value="F:GTP binding"/>
    <property type="evidence" value="ECO:0007669"/>
    <property type="project" value="UniProtKB-UniRule"/>
</dbReference>
<dbReference type="GO" id="GO:0003924">
    <property type="term" value="F:GTPase activity"/>
    <property type="evidence" value="ECO:0007669"/>
    <property type="project" value="InterPro"/>
</dbReference>
<dbReference type="GO" id="GO:0003746">
    <property type="term" value="F:translation elongation factor activity"/>
    <property type="evidence" value="ECO:0007669"/>
    <property type="project" value="UniProtKB-UniRule"/>
</dbReference>
<dbReference type="GO" id="GO:0032790">
    <property type="term" value="P:ribosome disassembly"/>
    <property type="evidence" value="ECO:0007669"/>
    <property type="project" value="TreeGrafter"/>
</dbReference>
<dbReference type="CDD" id="cd01886">
    <property type="entry name" value="EF-G"/>
    <property type="match status" value="1"/>
</dbReference>
<dbReference type="CDD" id="cd16262">
    <property type="entry name" value="EFG_III"/>
    <property type="match status" value="1"/>
</dbReference>
<dbReference type="CDD" id="cd01434">
    <property type="entry name" value="EFG_mtEFG1_IV"/>
    <property type="match status" value="1"/>
</dbReference>
<dbReference type="CDD" id="cd03713">
    <property type="entry name" value="EFG_mtEFG_C"/>
    <property type="match status" value="1"/>
</dbReference>
<dbReference type="CDD" id="cd04088">
    <property type="entry name" value="EFG_mtEFG_II"/>
    <property type="match status" value="1"/>
</dbReference>
<dbReference type="FunFam" id="2.40.30.10:FF:000006">
    <property type="entry name" value="Elongation factor G"/>
    <property type="match status" value="1"/>
</dbReference>
<dbReference type="FunFam" id="3.30.230.10:FF:000003">
    <property type="entry name" value="Elongation factor G"/>
    <property type="match status" value="1"/>
</dbReference>
<dbReference type="FunFam" id="3.30.70.240:FF:000001">
    <property type="entry name" value="Elongation factor G"/>
    <property type="match status" value="1"/>
</dbReference>
<dbReference type="FunFam" id="3.30.70.870:FF:000001">
    <property type="entry name" value="Elongation factor G"/>
    <property type="match status" value="1"/>
</dbReference>
<dbReference type="FunFam" id="3.40.50.300:FF:000029">
    <property type="entry name" value="Elongation factor G"/>
    <property type="match status" value="1"/>
</dbReference>
<dbReference type="Gene3D" id="3.30.230.10">
    <property type="match status" value="1"/>
</dbReference>
<dbReference type="Gene3D" id="3.30.70.240">
    <property type="match status" value="1"/>
</dbReference>
<dbReference type="Gene3D" id="3.30.70.870">
    <property type="entry name" value="Elongation Factor G (Translational Gtpase), domain 3"/>
    <property type="match status" value="1"/>
</dbReference>
<dbReference type="Gene3D" id="3.40.50.300">
    <property type="entry name" value="P-loop containing nucleotide triphosphate hydrolases"/>
    <property type="match status" value="1"/>
</dbReference>
<dbReference type="Gene3D" id="2.40.30.10">
    <property type="entry name" value="Translation factors"/>
    <property type="match status" value="1"/>
</dbReference>
<dbReference type="HAMAP" id="MF_00054_B">
    <property type="entry name" value="EF_G_EF_2_B"/>
    <property type="match status" value="1"/>
</dbReference>
<dbReference type="InterPro" id="IPR053905">
    <property type="entry name" value="EF-G-like_DII"/>
</dbReference>
<dbReference type="InterPro" id="IPR041095">
    <property type="entry name" value="EFG_II"/>
</dbReference>
<dbReference type="InterPro" id="IPR009022">
    <property type="entry name" value="EFG_III"/>
</dbReference>
<dbReference type="InterPro" id="IPR035647">
    <property type="entry name" value="EFG_III/V"/>
</dbReference>
<dbReference type="InterPro" id="IPR047872">
    <property type="entry name" value="EFG_IV"/>
</dbReference>
<dbReference type="InterPro" id="IPR035649">
    <property type="entry name" value="EFG_V"/>
</dbReference>
<dbReference type="InterPro" id="IPR000640">
    <property type="entry name" value="EFG_V-like"/>
</dbReference>
<dbReference type="InterPro" id="IPR031157">
    <property type="entry name" value="G_TR_CS"/>
</dbReference>
<dbReference type="InterPro" id="IPR027417">
    <property type="entry name" value="P-loop_NTPase"/>
</dbReference>
<dbReference type="InterPro" id="IPR020568">
    <property type="entry name" value="Ribosomal_Su5_D2-typ_SF"/>
</dbReference>
<dbReference type="InterPro" id="IPR014721">
    <property type="entry name" value="Ribsml_uS5_D2-typ_fold_subgr"/>
</dbReference>
<dbReference type="InterPro" id="IPR005225">
    <property type="entry name" value="Small_GTP-bd"/>
</dbReference>
<dbReference type="InterPro" id="IPR000795">
    <property type="entry name" value="T_Tr_GTP-bd_dom"/>
</dbReference>
<dbReference type="InterPro" id="IPR009000">
    <property type="entry name" value="Transl_B-barrel_sf"/>
</dbReference>
<dbReference type="InterPro" id="IPR004540">
    <property type="entry name" value="Transl_elong_EFG/EF2"/>
</dbReference>
<dbReference type="InterPro" id="IPR005517">
    <property type="entry name" value="Transl_elong_EFG/EF2_IV"/>
</dbReference>
<dbReference type="NCBIfam" id="TIGR00484">
    <property type="entry name" value="EF-G"/>
    <property type="match status" value="1"/>
</dbReference>
<dbReference type="NCBIfam" id="NF009379">
    <property type="entry name" value="PRK12740.1-3"/>
    <property type="match status" value="1"/>
</dbReference>
<dbReference type="NCBIfam" id="NF009381">
    <property type="entry name" value="PRK12740.1-5"/>
    <property type="match status" value="1"/>
</dbReference>
<dbReference type="NCBIfam" id="NF009891">
    <property type="entry name" value="PRK13351.1-1"/>
    <property type="match status" value="1"/>
</dbReference>
<dbReference type="NCBIfam" id="TIGR00231">
    <property type="entry name" value="small_GTP"/>
    <property type="match status" value="1"/>
</dbReference>
<dbReference type="PANTHER" id="PTHR43261:SF1">
    <property type="entry name" value="RIBOSOME-RELEASING FACTOR 2, MITOCHONDRIAL"/>
    <property type="match status" value="1"/>
</dbReference>
<dbReference type="PANTHER" id="PTHR43261">
    <property type="entry name" value="TRANSLATION ELONGATION FACTOR G-RELATED"/>
    <property type="match status" value="1"/>
</dbReference>
<dbReference type="Pfam" id="PF22042">
    <property type="entry name" value="EF-G_D2"/>
    <property type="match status" value="1"/>
</dbReference>
<dbReference type="Pfam" id="PF00679">
    <property type="entry name" value="EFG_C"/>
    <property type="match status" value="1"/>
</dbReference>
<dbReference type="Pfam" id="PF14492">
    <property type="entry name" value="EFG_III"/>
    <property type="match status" value="1"/>
</dbReference>
<dbReference type="Pfam" id="PF03764">
    <property type="entry name" value="EFG_IV"/>
    <property type="match status" value="1"/>
</dbReference>
<dbReference type="Pfam" id="PF00009">
    <property type="entry name" value="GTP_EFTU"/>
    <property type="match status" value="1"/>
</dbReference>
<dbReference type="PRINTS" id="PR00315">
    <property type="entry name" value="ELONGATNFCT"/>
</dbReference>
<dbReference type="SMART" id="SM00838">
    <property type="entry name" value="EFG_C"/>
    <property type="match status" value="1"/>
</dbReference>
<dbReference type="SMART" id="SM00889">
    <property type="entry name" value="EFG_IV"/>
    <property type="match status" value="1"/>
</dbReference>
<dbReference type="SUPFAM" id="SSF54980">
    <property type="entry name" value="EF-G C-terminal domain-like"/>
    <property type="match status" value="2"/>
</dbReference>
<dbReference type="SUPFAM" id="SSF52540">
    <property type="entry name" value="P-loop containing nucleoside triphosphate hydrolases"/>
    <property type="match status" value="1"/>
</dbReference>
<dbReference type="SUPFAM" id="SSF54211">
    <property type="entry name" value="Ribosomal protein S5 domain 2-like"/>
    <property type="match status" value="1"/>
</dbReference>
<dbReference type="SUPFAM" id="SSF50447">
    <property type="entry name" value="Translation proteins"/>
    <property type="match status" value="1"/>
</dbReference>
<dbReference type="PROSITE" id="PS00301">
    <property type="entry name" value="G_TR_1"/>
    <property type="match status" value="1"/>
</dbReference>
<dbReference type="PROSITE" id="PS51722">
    <property type="entry name" value="G_TR_2"/>
    <property type="match status" value="1"/>
</dbReference>
<reference key="1">
    <citation type="journal article" date="2003" name="Proc. Natl. Acad. Sci. U.S.A.">
        <title>Complete genome sequence of Lactobacillus plantarum WCFS1.</title>
        <authorList>
            <person name="Kleerebezem M."/>
            <person name="Boekhorst J."/>
            <person name="van Kranenburg R."/>
            <person name="Molenaar D."/>
            <person name="Kuipers O.P."/>
            <person name="Leer R."/>
            <person name="Tarchini R."/>
            <person name="Peters S.A."/>
            <person name="Sandbrink H.M."/>
            <person name="Fiers M.W.E.J."/>
            <person name="Stiekema W."/>
            <person name="Klein Lankhorst R.M."/>
            <person name="Bron P.A."/>
            <person name="Hoffer S.M."/>
            <person name="Nierop Groot M.N."/>
            <person name="Kerkhoven R."/>
            <person name="De Vries M."/>
            <person name="Ursing B."/>
            <person name="De Vos W.M."/>
            <person name="Siezen R.J."/>
        </authorList>
    </citation>
    <scope>NUCLEOTIDE SEQUENCE [LARGE SCALE GENOMIC DNA]</scope>
    <source>
        <strain>ATCC BAA-793 / NCIMB 8826 / WCFS1</strain>
    </source>
</reference>
<reference key="2">
    <citation type="journal article" date="2012" name="J. Bacteriol.">
        <title>Complete resequencing and reannotation of the Lactobacillus plantarum WCFS1 genome.</title>
        <authorList>
            <person name="Siezen R.J."/>
            <person name="Francke C."/>
            <person name="Renckens B."/>
            <person name="Boekhorst J."/>
            <person name="Wels M."/>
            <person name="Kleerebezem M."/>
            <person name="van Hijum S.A."/>
        </authorList>
    </citation>
    <scope>NUCLEOTIDE SEQUENCE [LARGE SCALE GENOMIC DNA]</scope>
    <scope>GENOME REANNOTATION</scope>
    <source>
        <strain>ATCC BAA-793 / NCIMB 8826 / WCFS1</strain>
    </source>
</reference>
<protein>
    <recommendedName>
        <fullName evidence="1">Elongation factor G</fullName>
        <shortName evidence="1">EF-G</shortName>
    </recommendedName>
</protein>
<sequence>MANTREFSLDKTRNIGIMAHIDAGKTTTTERILYYTGKIHKIGETHDGASQMDWMAQEQERGITITSAATTAQWKNHRINIIDTPGHVDFTVEVERSLRVLDGAIAVLDAQSGVEPQTETVWRQASTYNVPRIVFVNKMDKIGADFKYSVSTIHDRLQANAHAIQLPIGAEDNFEGVIDLIEMKADLYDEDQLGTEWDTVDVPDEYKEEAQAARDDLIEALADIDDGIMEKYLGGEEISKEEIKAAIRKGTLALEFFPVLAGSAFKNKGVQMLMDAVVDYLPSPLDVKPYKATDPETEEEVDLIAGDDKPFAALAFKVATDPFVGRLTFIRVYQGTLESGSYVLNATKDKRERVGRLLQMHSNQRKEIPEVFSGDIAAAIGLKNTTTGDSLTSIEHPYHLESMEFPDPVIQVAVEPKTKADQDKMNVALQKLSEEDPTFKAETNPETGETLIAGMGELHLDIIVDRMRREFNVEATVGAPQVSYRETFTKSTQVQGKFVHQSGGKGQYGDVWVEFTPNEEGKGFEFEDAIVGGVVPREYIPSVEQGLKEAMANGVLAGYPLVDVKAKLYDGSYHDVDSSEAAFKIAASLALRNAVKTAGPVILEPIMKVDIVAPEDYLGDVMGHVTARRGNIEGMEERGNAQEVHAYVPLAEMFGYATTLRSATQGRGTFTMTFDHYEKVPKSVQEDIIKKNGGTPAK</sequence>
<keyword id="KW-0963">Cytoplasm</keyword>
<keyword id="KW-0251">Elongation factor</keyword>
<keyword id="KW-0342">GTP-binding</keyword>
<keyword id="KW-0547">Nucleotide-binding</keyword>
<keyword id="KW-0648">Protein biosynthesis</keyword>
<keyword id="KW-1185">Reference proteome</keyword>
<organism>
    <name type="scientific">Lactiplantibacillus plantarum (strain ATCC BAA-793 / NCIMB 8826 / WCFS1)</name>
    <name type="common">Lactobacillus plantarum</name>
    <dbReference type="NCBI Taxonomy" id="220668"/>
    <lineage>
        <taxon>Bacteria</taxon>
        <taxon>Bacillati</taxon>
        <taxon>Bacillota</taxon>
        <taxon>Bacilli</taxon>
        <taxon>Lactobacillales</taxon>
        <taxon>Lactobacillaceae</taxon>
        <taxon>Lactiplantibacillus</taxon>
    </lineage>
</organism>
<comment type="function">
    <text evidence="1">Catalyzes the GTP-dependent ribosomal translocation step during translation elongation. During this step, the ribosome changes from the pre-translocational (PRE) to the post-translocational (POST) state as the newly formed A-site-bound peptidyl-tRNA and P-site-bound deacylated tRNA move to the P and E sites, respectively. Catalyzes the coordinated movement of the two tRNA molecules, the mRNA and conformational changes in the ribosome.</text>
</comment>
<comment type="subcellular location">
    <subcellularLocation>
        <location evidence="1">Cytoplasm</location>
    </subcellularLocation>
</comment>
<comment type="similarity">
    <text evidence="1">Belongs to the TRAFAC class translation factor GTPase superfamily. Classic translation factor GTPase family. EF-G/EF-2 subfamily.</text>
</comment>
<proteinExistence type="inferred from homology"/>
<gene>
    <name evidence="1" type="primary">fusA</name>
    <name type="ordered locus">lp_1027</name>
</gene>
<accession>Q88XY8</accession>
<accession>F9UMK3</accession>